<sequence length="206" mass="22787">MGEVEISARAYGKMCLHASRYPHAAVNGLLLAPATGSGECLCLTDCVPLFHSHLALSVMLEVALNQVDVWGAQAGLVVAGYYHANAVLDDQSPGPLALKIAGRIAEFFPRAVLIMLDNKKLVTRPRVPPVIVLENQGLQWVPKDKNLVMWRDWEESRQMVGALLEGRAHQHLVDFDCHLDDIRQDWTNQRLNTQITQWSGSTDGNA</sequence>
<reference key="1">
    <citation type="journal article" date="2005" name="Science">
        <title>The transcriptional landscape of the mammalian genome.</title>
        <authorList>
            <person name="Carninci P."/>
            <person name="Kasukawa T."/>
            <person name="Katayama S."/>
            <person name="Gough J."/>
            <person name="Frith M.C."/>
            <person name="Maeda N."/>
            <person name="Oyama R."/>
            <person name="Ravasi T."/>
            <person name="Lenhard B."/>
            <person name="Wells C."/>
            <person name="Kodzius R."/>
            <person name="Shimokawa K."/>
            <person name="Bajic V.B."/>
            <person name="Brenner S.E."/>
            <person name="Batalov S."/>
            <person name="Forrest A.R."/>
            <person name="Zavolan M."/>
            <person name="Davis M.J."/>
            <person name="Wilming L.G."/>
            <person name="Aidinis V."/>
            <person name="Allen J.E."/>
            <person name="Ambesi-Impiombato A."/>
            <person name="Apweiler R."/>
            <person name="Aturaliya R.N."/>
            <person name="Bailey T.L."/>
            <person name="Bansal M."/>
            <person name="Baxter L."/>
            <person name="Beisel K.W."/>
            <person name="Bersano T."/>
            <person name="Bono H."/>
            <person name="Chalk A.M."/>
            <person name="Chiu K.P."/>
            <person name="Choudhary V."/>
            <person name="Christoffels A."/>
            <person name="Clutterbuck D.R."/>
            <person name="Crowe M.L."/>
            <person name="Dalla E."/>
            <person name="Dalrymple B.P."/>
            <person name="de Bono B."/>
            <person name="Della Gatta G."/>
            <person name="di Bernardo D."/>
            <person name="Down T."/>
            <person name="Engstrom P."/>
            <person name="Fagiolini M."/>
            <person name="Faulkner G."/>
            <person name="Fletcher C.F."/>
            <person name="Fukushima T."/>
            <person name="Furuno M."/>
            <person name="Futaki S."/>
            <person name="Gariboldi M."/>
            <person name="Georgii-Hemming P."/>
            <person name="Gingeras T.R."/>
            <person name="Gojobori T."/>
            <person name="Green R.E."/>
            <person name="Gustincich S."/>
            <person name="Harbers M."/>
            <person name="Hayashi Y."/>
            <person name="Hensch T.K."/>
            <person name="Hirokawa N."/>
            <person name="Hill D."/>
            <person name="Huminiecki L."/>
            <person name="Iacono M."/>
            <person name="Ikeo K."/>
            <person name="Iwama A."/>
            <person name="Ishikawa T."/>
            <person name="Jakt M."/>
            <person name="Kanapin A."/>
            <person name="Katoh M."/>
            <person name="Kawasawa Y."/>
            <person name="Kelso J."/>
            <person name="Kitamura H."/>
            <person name="Kitano H."/>
            <person name="Kollias G."/>
            <person name="Krishnan S.P."/>
            <person name="Kruger A."/>
            <person name="Kummerfeld S.K."/>
            <person name="Kurochkin I.V."/>
            <person name="Lareau L.F."/>
            <person name="Lazarevic D."/>
            <person name="Lipovich L."/>
            <person name="Liu J."/>
            <person name="Liuni S."/>
            <person name="McWilliam S."/>
            <person name="Madan Babu M."/>
            <person name="Madera M."/>
            <person name="Marchionni L."/>
            <person name="Matsuda H."/>
            <person name="Matsuzawa S."/>
            <person name="Miki H."/>
            <person name="Mignone F."/>
            <person name="Miyake S."/>
            <person name="Morris K."/>
            <person name="Mottagui-Tabar S."/>
            <person name="Mulder N."/>
            <person name="Nakano N."/>
            <person name="Nakauchi H."/>
            <person name="Ng P."/>
            <person name="Nilsson R."/>
            <person name="Nishiguchi S."/>
            <person name="Nishikawa S."/>
            <person name="Nori F."/>
            <person name="Ohara O."/>
            <person name="Okazaki Y."/>
            <person name="Orlando V."/>
            <person name="Pang K.C."/>
            <person name="Pavan W.J."/>
            <person name="Pavesi G."/>
            <person name="Pesole G."/>
            <person name="Petrovsky N."/>
            <person name="Piazza S."/>
            <person name="Reed J."/>
            <person name="Reid J.F."/>
            <person name="Ring B.Z."/>
            <person name="Ringwald M."/>
            <person name="Rost B."/>
            <person name="Ruan Y."/>
            <person name="Salzberg S.L."/>
            <person name="Sandelin A."/>
            <person name="Schneider C."/>
            <person name="Schoenbach C."/>
            <person name="Sekiguchi K."/>
            <person name="Semple C.A."/>
            <person name="Seno S."/>
            <person name="Sessa L."/>
            <person name="Sheng Y."/>
            <person name="Shibata Y."/>
            <person name="Shimada H."/>
            <person name="Shimada K."/>
            <person name="Silva D."/>
            <person name="Sinclair B."/>
            <person name="Sperling S."/>
            <person name="Stupka E."/>
            <person name="Sugiura K."/>
            <person name="Sultana R."/>
            <person name="Takenaka Y."/>
            <person name="Taki K."/>
            <person name="Tammoja K."/>
            <person name="Tan S.L."/>
            <person name="Tang S."/>
            <person name="Taylor M.S."/>
            <person name="Tegner J."/>
            <person name="Teichmann S.A."/>
            <person name="Ueda H.R."/>
            <person name="van Nimwegen E."/>
            <person name="Verardo R."/>
            <person name="Wei C.L."/>
            <person name="Yagi K."/>
            <person name="Yamanishi H."/>
            <person name="Zabarovsky E."/>
            <person name="Zhu S."/>
            <person name="Zimmer A."/>
            <person name="Hide W."/>
            <person name="Bult C."/>
            <person name="Grimmond S.M."/>
            <person name="Teasdale R.D."/>
            <person name="Liu E.T."/>
            <person name="Brusic V."/>
            <person name="Quackenbush J."/>
            <person name="Wahlestedt C."/>
            <person name="Mattick J.S."/>
            <person name="Hume D.A."/>
            <person name="Kai C."/>
            <person name="Sasaki D."/>
            <person name="Tomaru Y."/>
            <person name="Fukuda S."/>
            <person name="Kanamori-Katayama M."/>
            <person name="Suzuki M."/>
            <person name="Aoki J."/>
            <person name="Arakawa T."/>
            <person name="Iida J."/>
            <person name="Imamura K."/>
            <person name="Itoh M."/>
            <person name="Kato T."/>
            <person name="Kawaji H."/>
            <person name="Kawagashira N."/>
            <person name="Kawashima T."/>
            <person name="Kojima M."/>
            <person name="Kondo S."/>
            <person name="Konno H."/>
            <person name="Nakano K."/>
            <person name="Ninomiya N."/>
            <person name="Nishio T."/>
            <person name="Okada M."/>
            <person name="Plessy C."/>
            <person name="Shibata K."/>
            <person name="Shiraki T."/>
            <person name="Suzuki S."/>
            <person name="Tagami M."/>
            <person name="Waki K."/>
            <person name="Watahiki A."/>
            <person name="Okamura-Oho Y."/>
            <person name="Suzuki H."/>
            <person name="Kawai J."/>
            <person name="Hayashizaki Y."/>
        </authorList>
    </citation>
    <scope>NUCLEOTIDE SEQUENCE [LARGE SCALE MRNA]</scope>
    <source>
        <strain>C57BL/6J</strain>
        <tissue>Cerebellum</tissue>
    </source>
</reference>
<reference key="2">
    <citation type="journal article" date="2004" name="Genome Res.">
        <title>The status, quality, and expansion of the NIH full-length cDNA project: the Mammalian Gene Collection (MGC).</title>
        <authorList>
            <consortium name="The MGC Project Team"/>
        </authorList>
    </citation>
    <scope>NUCLEOTIDE SEQUENCE [LARGE SCALE MRNA]</scope>
    <source>
        <strain>FVB/N</strain>
        <tissue>Liver</tissue>
    </source>
</reference>
<reference key="3">
    <citation type="journal article" date="2010" name="Cell">
        <title>A tissue-specific atlas of mouse protein phosphorylation and expression.</title>
        <authorList>
            <person name="Huttlin E.L."/>
            <person name="Jedrychowski M.P."/>
            <person name="Elias J.E."/>
            <person name="Goswami T."/>
            <person name="Rad R."/>
            <person name="Beausoleil S.A."/>
            <person name="Villen J."/>
            <person name="Haas W."/>
            <person name="Sowa M.E."/>
            <person name="Gygi S.P."/>
        </authorList>
    </citation>
    <scope>IDENTIFICATION BY MASS SPECTROMETRY [LARGE SCALE ANALYSIS]</scope>
    <source>
        <tissue>Kidney</tissue>
        <tissue>Pancreas</tissue>
    </source>
</reference>
<evidence type="ECO:0000250" key="1">
    <source>
        <dbReference type="UniProtKB" id="Q9Y3B6"/>
    </source>
</evidence>
<evidence type="ECO:0000255" key="2">
    <source>
        <dbReference type="PROSITE-ProRule" id="PRU01182"/>
    </source>
</evidence>
<evidence type="ECO:0000305" key="3"/>
<keyword id="KW-0256">Endoplasmic reticulum</keyword>
<keyword id="KW-0472">Membrane</keyword>
<keyword id="KW-1185">Reference proteome</keyword>
<protein>
    <recommendedName>
        <fullName>ER membrane protein complex subunit 9</fullName>
    </recommendedName>
    <alternativeName>
        <fullName>Protein FAM158A</fullName>
    </alternativeName>
</protein>
<dbReference type="EMBL" id="AK005154">
    <property type="protein sequence ID" value="BAB23847.1"/>
    <property type="molecule type" value="mRNA"/>
</dbReference>
<dbReference type="EMBL" id="BC024704">
    <property type="protein sequence ID" value="AAH24704.1"/>
    <property type="molecule type" value="mRNA"/>
</dbReference>
<dbReference type="CCDS" id="CCDS27117.1"/>
<dbReference type="RefSeq" id="NP_149158.1">
    <property type="nucleotide sequence ID" value="NM_033146.2"/>
</dbReference>
<dbReference type="SMR" id="Q9DB76"/>
<dbReference type="ComplexPortal" id="CPX-5883">
    <property type="entry name" value="Endoplasmic reticulum membrane complex, EMC9 variant"/>
</dbReference>
<dbReference type="FunCoup" id="Q9DB76">
    <property type="interactions" value="1347"/>
</dbReference>
<dbReference type="STRING" id="10090.ENSMUSP00000022828"/>
<dbReference type="PhosphoSitePlus" id="Q9DB76"/>
<dbReference type="PaxDb" id="10090-ENSMUSP00000022828"/>
<dbReference type="ProteomicsDB" id="275613"/>
<dbReference type="Antibodypedia" id="55830">
    <property type="antibodies" value="42 antibodies from 12 providers"/>
</dbReference>
<dbReference type="DNASU" id="85308"/>
<dbReference type="Ensembl" id="ENSMUST00000022828.9">
    <property type="protein sequence ID" value="ENSMUSP00000022828.9"/>
    <property type="gene ID" value="ENSMUSG00000022217.15"/>
</dbReference>
<dbReference type="GeneID" id="85308"/>
<dbReference type="KEGG" id="mmu:85308"/>
<dbReference type="UCSC" id="uc007tze.1">
    <property type="organism name" value="mouse"/>
</dbReference>
<dbReference type="AGR" id="MGI:1934682"/>
<dbReference type="CTD" id="51016"/>
<dbReference type="MGI" id="MGI:1934682">
    <property type="gene designation" value="Emc9"/>
</dbReference>
<dbReference type="VEuPathDB" id="HostDB:ENSMUSG00000022217"/>
<dbReference type="eggNOG" id="KOG3289">
    <property type="taxonomic scope" value="Eukaryota"/>
</dbReference>
<dbReference type="GeneTree" id="ENSGT00390000006738"/>
<dbReference type="HOGENOM" id="CLU_087337_0_1_1"/>
<dbReference type="InParanoid" id="Q9DB76"/>
<dbReference type="OMA" id="CLSDCVP"/>
<dbReference type="OrthoDB" id="194468at2759"/>
<dbReference type="PhylomeDB" id="Q9DB76"/>
<dbReference type="TreeFam" id="TF313860"/>
<dbReference type="BioGRID-ORCS" id="85308">
    <property type="hits" value="3 hits in 77 CRISPR screens"/>
</dbReference>
<dbReference type="PRO" id="PR:Q9DB76"/>
<dbReference type="Proteomes" id="UP000000589">
    <property type="component" value="Chromosome 14"/>
</dbReference>
<dbReference type="RNAct" id="Q9DB76">
    <property type="molecule type" value="protein"/>
</dbReference>
<dbReference type="Bgee" id="ENSMUSG00000022217">
    <property type="expression patterns" value="Expressed in facial nucleus and 205 other cell types or tissues"/>
</dbReference>
<dbReference type="ExpressionAtlas" id="Q9DB76">
    <property type="expression patterns" value="baseline and differential"/>
</dbReference>
<dbReference type="GO" id="GO:0005737">
    <property type="term" value="C:cytoplasm"/>
    <property type="evidence" value="ECO:0000250"/>
    <property type="project" value="UniProtKB"/>
</dbReference>
<dbReference type="GO" id="GO:0072546">
    <property type="term" value="C:EMC complex"/>
    <property type="evidence" value="ECO:0000250"/>
    <property type="project" value="UniProtKB"/>
</dbReference>
<dbReference type="GO" id="GO:0005789">
    <property type="term" value="C:endoplasmic reticulum membrane"/>
    <property type="evidence" value="ECO:0000303"/>
    <property type="project" value="ComplexPortal"/>
</dbReference>
<dbReference type="GO" id="GO:0032977">
    <property type="term" value="F:membrane insertase activity"/>
    <property type="evidence" value="ECO:0007669"/>
    <property type="project" value="Ensembl"/>
</dbReference>
<dbReference type="GO" id="GO:0045050">
    <property type="term" value="P:protein insertion into ER membrane by stop-transfer membrane-anchor sequence"/>
    <property type="evidence" value="ECO:0000250"/>
    <property type="project" value="UniProtKB"/>
</dbReference>
<dbReference type="GO" id="GO:0071816">
    <property type="term" value="P:tail-anchored membrane protein insertion into ER membrane"/>
    <property type="evidence" value="ECO:0000250"/>
    <property type="project" value="UniProtKB"/>
</dbReference>
<dbReference type="CDD" id="cd08060">
    <property type="entry name" value="MPN_UPF0172"/>
    <property type="match status" value="1"/>
</dbReference>
<dbReference type="InterPro" id="IPR005366">
    <property type="entry name" value="EMC8/9"/>
</dbReference>
<dbReference type="InterPro" id="IPR037518">
    <property type="entry name" value="MPN"/>
</dbReference>
<dbReference type="PANTHER" id="PTHR12941">
    <property type="entry name" value="ER MEMBRANE PROTEIN COMPLEX"/>
    <property type="match status" value="1"/>
</dbReference>
<dbReference type="PANTHER" id="PTHR12941:SF12">
    <property type="entry name" value="ER MEMBRANE PROTEIN COMPLEX SUBUNIT 9"/>
    <property type="match status" value="1"/>
</dbReference>
<dbReference type="Pfam" id="PF03665">
    <property type="entry name" value="UPF0172"/>
    <property type="match status" value="1"/>
</dbReference>
<dbReference type="PROSITE" id="PS50249">
    <property type="entry name" value="MPN"/>
    <property type="match status" value="1"/>
</dbReference>
<name>EMC9_MOUSE</name>
<gene>
    <name type="primary">Emc9</name>
    <name type="synonym">Cgi112</name>
    <name type="synonym">Fam158a</name>
</gene>
<organism>
    <name type="scientific">Mus musculus</name>
    <name type="common">Mouse</name>
    <dbReference type="NCBI Taxonomy" id="10090"/>
    <lineage>
        <taxon>Eukaryota</taxon>
        <taxon>Metazoa</taxon>
        <taxon>Chordata</taxon>
        <taxon>Craniata</taxon>
        <taxon>Vertebrata</taxon>
        <taxon>Euteleostomi</taxon>
        <taxon>Mammalia</taxon>
        <taxon>Eutheria</taxon>
        <taxon>Euarchontoglires</taxon>
        <taxon>Glires</taxon>
        <taxon>Rodentia</taxon>
        <taxon>Myomorpha</taxon>
        <taxon>Muroidea</taxon>
        <taxon>Muridae</taxon>
        <taxon>Murinae</taxon>
        <taxon>Mus</taxon>
        <taxon>Mus</taxon>
    </lineage>
</organism>
<proteinExistence type="evidence at protein level"/>
<feature type="chain" id="PRO_0000221190" description="ER membrane protein complex subunit 9">
    <location>
        <begin position="1"/>
        <end position="206"/>
    </location>
</feature>
<feature type="domain" description="MPN" evidence="2">
    <location>
        <begin position="4"/>
        <end position="139"/>
    </location>
</feature>
<comment type="function">
    <text evidence="1">Part of the endoplasmic reticulum membrane protein complex (EMC) that enables the energy-independent insertion into endoplasmic reticulum membranes of newly synthesized membrane proteins. Preferentially accommodates proteins with transmembrane domains that are weakly hydrophobic or contain destabilizing features such as charged and aromatic residues. Involved in the cotranslational insertion of multi-pass membrane proteins in which stop-transfer membrane-anchor sequences become ER membrane spanning helices. It is also required for the post-translational insertion of tail-anchored/TA proteins in endoplasmic reticulum membranes. By mediating the proper cotranslational insertion of N-terminal transmembrane domains in an N-exo topology, with translocated N-terminus in the lumen of the ER, controls the topology of multi-pass membrane proteins like the G protein-coupled receptors. By regulating the insertion of various proteins in membranes, it is indirectly involved in many cellular processes.</text>
</comment>
<comment type="subunit">
    <text evidence="1">Component of the ER membrane protein complex (EMC). EMC8 and EMC9 are mutually exclusive subunits of the EMC complex.</text>
</comment>
<comment type="subcellular location">
    <subcellularLocation>
        <location evidence="1">Endoplasmic reticulum membrane</location>
        <topology evidence="1">Peripheral membrane protein</topology>
        <orientation evidence="1">Cytoplasmic side</orientation>
    </subcellularLocation>
</comment>
<comment type="similarity">
    <text evidence="3">Belongs to the EMC8/EMC9 family.</text>
</comment>
<accession>Q9DB76</accession>